<feature type="chain" id="PRO_0000359470" description="Alkyl hydroperoxide reductase AhpD">
    <location>
        <begin position="1"/>
        <end position="186"/>
    </location>
</feature>
<feature type="active site" description="Proton donor" evidence="2">
    <location>
        <position position="132"/>
    </location>
</feature>
<feature type="active site" description="Cysteine sulfenic acid (-SOH) intermediate" evidence="2">
    <location>
        <position position="135"/>
    </location>
</feature>
<feature type="disulfide bond" evidence="1">
    <location>
        <begin position="132"/>
        <end position="135"/>
    </location>
</feature>
<feature type="disulfide bond" description="Interchain (with AhpC); in linked form" evidence="2">
    <location>
        <position position="135"/>
    </location>
</feature>
<evidence type="ECO:0000250" key="1"/>
<evidence type="ECO:0000255" key="2">
    <source>
        <dbReference type="HAMAP-Rule" id="MF_01676"/>
    </source>
</evidence>
<name>AHPD_ANASK</name>
<protein>
    <recommendedName>
        <fullName evidence="2">Alkyl hydroperoxide reductase AhpD</fullName>
        <ecNumber evidence="2">1.11.1.28</ecNumber>
    </recommendedName>
    <alternativeName>
        <fullName evidence="2">Alkylhydroperoxidase AhpD</fullName>
    </alternativeName>
</protein>
<accession>B4UA87</accession>
<gene>
    <name evidence="2" type="primary">ahpD</name>
    <name type="ordered locus">AnaeK_0325</name>
</gene>
<keyword id="KW-0049">Antioxidant</keyword>
<keyword id="KW-1015">Disulfide bond</keyword>
<keyword id="KW-0560">Oxidoreductase</keyword>
<keyword id="KW-0575">Peroxidase</keyword>
<keyword id="KW-0676">Redox-active center</keyword>
<sequence length="186" mass="19420">MATLDAIREALPEPARDIKLNLQAVLQPGTLTPAQRWGVAVATAAAARNERLLAAVLADARAEVEPAVVEDALAAAAVMAMNNVYYRFRHMVGKASYAEKPARLRMNRLVKPAASKVDFELFALAVSAVNGCETCVRSHEQVVVAGGLSEDQVHEAVRIAAVLHAAAVSLELAGYAAVPSAAAAAG</sequence>
<dbReference type="EC" id="1.11.1.28" evidence="2"/>
<dbReference type="EMBL" id="CP001131">
    <property type="protein sequence ID" value="ACG71567.1"/>
    <property type="molecule type" value="Genomic_DNA"/>
</dbReference>
<dbReference type="RefSeq" id="WP_012524400.1">
    <property type="nucleotide sequence ID" value="NC_011145.1"/>
</dbReference>
<dbReference type="SMR" id="B4UA87"/>
<dbReference type="KEGG" id="ank:AnaeK_0325"/>
<dbReference type="HOGENOM" id="CLU_105328_0_0_7"/>
<dbReference type="OrthoDB" id="9801997at2"/>
<dbReference type="Proteomes" id="UP000001871">
    <property type="component" value="Chromosome"/>
</dbReference>
<dbReference type="GO" id="GO:0008785">
    <property type="term" value="F:alkyl hydroperoxide reductase activity"/>
    <property type="evidence" value="ECO:0007669"/>
    <property type="project" value="UniProtKB-UniRule"/>
</dbReference>
<dbReference type="GO" id="GO:0015036">
    <property type="term" value="F:disulfide oxidoreductase activity"/>
    <property type="evidence" value="ECO:0007669"/>
    <property type="project" value="TreeGrafter"/>
</dbReference>
<dbReference type="GO" id="GO:0032843">
    <property type="term" value="F:hydroperoxide reductase activity"/>
    <property type="evidence" value="ECO:0007669"/>
    <property type="project" value="InterPro"/>
</dbReference>
<dbReference type="GO" id="GO:0051920">
    <property type="term" value="F:peroxiredoxin activity"/>
    <property type="evidence" value="ECO:0007669"/>
    <property type="project" value="InterPro"/>
</dbReference>
<dbReference type="GO" id="GO:0045454">
    <property type="term" value="P:cell redox homeostasis"/>
    <property type="evidence" value="ECO:0007669"/>
    <property type="project" value="TreeGrafter"/>
</dbReference>
<dbReference type="GO" id="GO:0006979">
    <property type="term" value="P:response to oxidative stress"/>
    <property type="evidence" value="ECO:0007669"/>
    <property type="project" value="InterPro"/>
</dbReference>
<dbReference type="Gene3D" id="1.20.1290.10">
    <property type="entry name" value="AhpD-like"/>
    <property type="match status" value="1"/>
</dbReference>
<dbReference type="HAMAP" id="MF_01676">
    <property type="entry name" value="AhpD"/>
    <property type="match status" value="1"/>
</dbReference>
<dbReference type="InterPro" id="IPR004674">
    <property type="entry name" value="AhpD"/>
</dbReference>
<dbReference type="InterPro" id="IPR029032">
    <property type="entry name" value="AhpD-like"/>
</dbReference>
<dbReference type="InterPro" id="IPR004675">
    <property type="entry name" value="AhpD_core"/>
</dbReference>
<dbReference type="InterPro" id="IPR003779">
    <property type="entry name" value="CMD-like"/>
</dbReference>
<dbReference type="NCBIfam" id="TIGR00778">
    <property type="entry name" value="ahpD_dom"/>
    <property type="match status" value="1"/>
</dbReference>
<dbReference type="PANTHER" id="PTHR33930">
    <property type="entry name" value="ALKYL HYDROPEROXIDE REDUCTASE AHPD"/>
    <property type="match status" value="1"/>
</dbReference>
<dbReference type="PANTHER" id="PTHR33930:SF7">
    <property type="entry name" value="ALKYL HYDROPEROXIDE REDUCTASE AHPD"/>
    <property type="match status" value="1"/>
</dbReference>
<dbReference type="Pfam" id="PF02627">
    <property type="entry name" value="CMD"/>
    <property type="match status" value="1"/>
</dbReference>
<dbReference type="SUPFAM" id="SSF69118">
    <property type="entry name" value="AhpD-like"/>
    <property type="match status" value="1"/>
</dbReference>
<organism>
    <name type="scientific">Anaeromyxobacter sp. (strain K)</name>
    <dbReference type="NCBI Taxonomy" id="447217"/>
    <lineage>
        <taxon>Bacteria</taxon>
        <taxon>Pseudomonadati</taxon>
        <taxon>Myxococcota</taxon>
        <taxon>Myxococcia</taxon>
        <taxon>Myxococcales</taxon>
        <taxon>Cystobacterineae</taxon>
        <taxon>Anaeromyxobacteraceae</taxon>
        <taxon>Anaeromyxobacter</taxon>
    </lineage>
</organism>
<comment type="function">
    <text evidence="2">Antioxidant protein with alkyl hydroperoxidase activity. Required for the reduction of the AhpC active site cysteine residues and for the regeneration of the AhpC enzyme activity.</text>
</comment>
<comment type="catalytic activity">
    <reaction evidence="2">
        <text>N(6)-[(R)-dihydrolipoyl]-L-lysyl-[lipoyl-carrier protein] + a hydroperoxide = N(6)-[(R)-lipoyl]-L-lysyl-[lipoyl-carrier protein] + an alcohol + H2O</text>
        <dbReference type="Rhea" id="RHEA:62636"/>
        <dbReference type="Rhea" id="RHEA-COMP:10502"/>
        <dbReference type="Rhea" id="RHEA-COMP:16355"/>
        <dbReference type="ChEBI" id="CHEBI:15377"/>
        <dbReference type="ChEBI" id="CHEBI:30879"/>
        <dbReference type="ChEBI" id="CHEBI:35924"/>
        <dbReference type="ChEBI" id="CHEBI:83099"/>
        <dbReference type="ChEBI" id="CHEBI:83100"/>
        <dbReference type="EC" id="1.11.1.28"/>
    </reaction>
</comment>
<comment type="similarity">
    <text evidence="2">Belongs to the AhpD family.</text>
</comment>
<reference key="1">
    <citation type="submission" date="2008-08" db="EMBL/GenBank/DDBJ databases">
        <title>Complete sequence of Anaeromyxobacter sp. K.</title>
        <authorList>
            <consortium name="US DOE Joint Genome Institute"/>
            <person name="Lucas S."/>
            <person name="Copeland A."/>
            <person name="Lapidus A."/>
            <person name="Glavina del Rio T."/>
            <person name="Dalin E."/>
            <person name="Tice H."/>
            <person name="Bruce D."/>
            <person name="Goodwin L."/>
            <person name="Pitluck S."/>
            <person name="Saunders E."/>
            <person name="Brettin T."/>
            <person name="Detter J.C."/>
            <person name="Han C."/>
            <person name="Larimer F."/>
            <person name="Land M."/>
            <person name="Hauser L."/>
            <person name="Kyrpides N."/>
            <person name="Ovchinnikiva G."/>
            <person name="Beliaev A."/>
        </authorList>
    </citation>
    <scope>NUCLEOTIDE SEQUENCE [LARGE SCALE GENOMIC DNA]</scope>
    <source>
        <strain>K</strain>
    </source>
</reference>
<proteinExistence type="inferred from homology"/>